<comment type="function">
    <text evidence="1">Increases the formation of ribosomal termination complexes and stimulates activities of RF-1 and RF-2. It binds guanine nucleotides and has strong preference for UGA stop codons. It may interact directly with the ribosome. The stimulation of RF-1 and RF-2 is significantly reduced by GTP and GDP, but not by GMP.</text>
</comment>
<comment type="subcellular location">
    <subcellularLocation>
        <location evidence="1">Cytoplasm</location>
    </subcellularLocation>
</comment>
<comment type="similarity">
    <text evidence="1">Belongs to the TRAFAC class translation factor GTPase superfamily. Classic translation factor GTPase family. PrfC subfamily.</text>
</comment>
<gene>
    <name evidence="1" type="primary">prfC</name>
    <name type="ordered locus">PC1_0453</name>
</gene>
<organism>
    <name type="scientific">Pectobacterium carotovorum subsp. carotovorum (strain PC1)</name>
    <dbReference type="NCBI Taxonomy" id="561230"/>
    <lineage>
        <taxon>Bacteria</taxon>
        <taxon>Pseudomonadati</taxon>
        <taxon>Pseudomonadota</taxon>
        <taxon>Gammaproteobacteria</taxon>
        <taxon>Enterobacterales</taxon>
        <taxon>Pectobacteriaceae</taxon>
        <taxon>Pectobacterium</taxon>
    </lineage>
</organism>
<name>RF3_PECCP</name>
<keyword id="KW-0963">Cytoplasm</keyword>
<keyword id="KW-0342">GTP-binding</keyword>
<keyword id="KW-0547">Nucleotide-binding</keyword>
<keyword id="KW-0648">Protein biosynthesis</keyword>
<reference key="1">
    <citation type="submission" date="2009-07" db="EMBL/GenBank/DDBJ databases">
        <title>Complete sequence of Pectobacterium carotovorum subsp. carotovorum PC1.</title>
        <authorList>
            <consortium name="US DOE Joint Genome Institute"/>
            <person name="Lucas S."/>
            <person name="Copeland A."/>
            <person name="Lapidus A."/>
            <person name="Glavina del Rio T."/>
            <person name="Tice H."/>
            <person name="Bruce D."/>
            <person name="Goodwin L."/>
            <person name="Pitluck S."/>
            <person name="Munk A.C."/>
            <person name="Brettin T."/>
            <person name="Detter J.C."/>
            <person name="Han C."/>
            <person name="Tapia R."/>
            <person name="Larimer F."/>
            <person name="Land M."/>
            <person name="Hauser L."/>
            <person name="Kyrpides N."/>
            <person name="Mikhailova N."/>
            <person name="Balakrishnan V."/>
            <person name="Glasner J."/>
            <person name="Perna N.T."/>
        </authorList>
    </citation>
    <scope>NUCLEOTIDE SEQUENCE [LARGE SCALE GENOMIC DNA]</scope>
    <source>
        <strain>PC1</strain>
    </source>
</reference>
<evidence type="ECO:0000255" key="1">
    <source>
        <dbReference type="HAMAP-Rule" id="MF_00072"/>
    </source>
</evidence>
<proteinExistence type="inferred from homology"/>
<sequence length="529" mass="59726">MSPSEYAREVSKRRTFAIISHPDAGKTTITEKVLLFGQAIQTAGTVKGRGSNQHAKSDWMEMEKQRGISITTSVMQFPYRECLVNLLDTPGHEDFSEDTYRTLTAVDCCLMVIDAAKGVEDRTRKLMEVTRLRDTPILTFMNKLDRDIRDPMEVLDEVESELKIACAPITWPIGCGKLFKGVYHLYKDETYLYQTGKGHTIQEVRIVKGLDNPELDTAVGEELAAQLREELELVKGASHEFELDAFLAGELTPVFFGTALGNFGVDHMLDGLVAWAPAPMPRKTDTREVTAAEEKFTGFVFKIQANMDPKHRDRVAFMRVVSGRYEKSMKLRQVRTGKDVVISDALTFMAGDRSHIEEAYPGDIIGLHNHGTIQIGDTFTQGEDMKFTGIPNFAPELFRRIRLRDPLKQKQLLKGLVQLSEEGAVQVFRPLTNNDLIVGAVGVLQFDVVVARLKTEYNVEAIYESVNVSTARWVECSDVKKFEEFKRKNELHLALDGGDNLAYVAPTMVNLNLTRERYPEVTFHQTREH</sequence>
<dbReference type="EMBL" id="CP001657">
    <property type="protein sequence ID" value="ACT11509.1"/>
    <property type="molecule type" value="Genomic_DNA"/>
</dbReference>
<dbReference type="RefSeq" id="WP_012773164.1">
    <property type="nucleotide sequence ID" value="NC_012917.1"/>
</dbReference>
<dbReference type="SMR" id="C6DJU6"/>
<dbReference type="STRING" id="561230.PC1_0453"/>
<dbReference type="KEGG" id="pct:PC1_0453"/>
<dbReference type="eggNOG" id="COG4108">
    <property type="taxonomic scope" value="Bacteria"/>
</dbReference>
<dbReference type="HOGENOM" id="CLU_002794_2_1_6"/>
<dbReference type="OrthoDB" id="9801472at2"/>
<dbReference type="Proteomes" id="UP000002736">
    <property type="component" value="Chromosome"/>
</dbReference>
<dbReference type="GO" id="GO:0005829">
    <property type="term" value="C:cytosol"/>
    <property type="evidence" value="ECO:0007669"/>
    <property type="project" value="TreeGrafter"/>
</dbReference>
<dbReference type="GO" id="GO:0005525">
    <property type="term" value="F:GTP binding"/>
    <property type="evidence" value="ECO:0007669"/>
    <property type="project" value="UniProtKB-UniRule"/>
</dbReference>
<dbReference type="GO" id="GO:0003924">
    <property type="term" value="F:GTPase activity"/>
    <property type="evidence" value="ECO:0007669"/>
    <property type="project" value="InterPro"/>
</dbReference>
<dbReference type="GO" id="GO:0097216">
    <property type="term" value="F:guanosine tetraphosphate binding"/>
    <property type="evidence" value="ECO:0007669"/>
    <property type="project" value="UniProtKB-ARBA"/>
</dbReference>
<dbReference type="GO" id="GO:0016150">
    <property type="term" value="F:translation release factor activity, codon nonspecific"/>
    <property type="evidence" value="ECO:0007669"/>
    <property type="project" value="TreeGrafter"/>
</dbReference>
<dbReference type="GO" id="GO:0016149">
    <property type="term" value="F:translation release factor activity, codon specific"/>
    <property type="evidence" value="ECO:0007669"/>
    <property type="project" value="UniProtKB-UniRule"/>
</dbReference>
<dbReference type="GO" id="GO:0006449">
    <property type="term" value="P:regulation of translational termination"/>
    <property type="evidence" value="ECO:0007669"/>
    <property type="project" value="UniProtKB-UniRule"/>
</dbReference>
<dbReference type="CDD" id="cd04169">
    <property type="entry name" value="RF3"/>
    <property type="match status" value="1"/>
</dbReference>
<dbReference type="CDD" id="cd03689">
    <property type="entry name" value="RF3_II"/>
    <property type="match status" value="1"/>
</dbReference>
<dbReference type="CDD" id="cd16259">
    <property type="entry name" value="RF3_III"/>
    <property type="match status" value="1"/>
</dbReference>
<dbReference type="FunFam" id="2.40.30.10:FF:000040">
    <property type="entry name" value="Peptide chain release factor 3"/>
    <property type="match status" value="1"/>
</dbReference>
<dbReference type="FunFam" id="3.30.70.3280:FF:000001">
    <property type="entry name" value="Peptide chain release factor 3"/>
    <property type="match status" value="1"/>
</dbReference>
<dbReference type="FunFam" id="3.40.50.300:FF:000184">
    <property type="entry name" value="Peptide chain release factor 3"/>
    <property type="match status" value="1"/>
</dbReference>
<dbReference type="FunFam" id="3.40.50.300:FF:000253">
    <property type="entry name" value="Peptide chain release factor 3"/>
    <property type="match status" value="1"/>
</dbReference>
<dbReference type="Gene3D" id="3.40.50.300">
    <property type="entry name" value="P-loop containing nucleotide triphosphate hydrolases"/>
    <property type="match status" value="3"/>
</dbReference>
<dbReference type="Gene3D" id="3.30.70.3280">
    <property type="entry name" value="Peptide chain release factor 3, domain III"/>
    <property type="match status" value="1"/>
</dbReference>
<dbReference type="HAMAP" id="MF_00072">
    <property type="entry name" value="Rel_fac_3"/>
    <property type="match status" value="1"/>
</dbReference>
<dbReference type="InterPro" id="IPR053905">
    <property type="entry name" value="EF-G-like_DII"/>
</dbReference>
<dbReference type="InterPro" id="IPR035647">
    <property type="entry name" value="EFG_III/V"/>
</dbReference>
<dbReference type="InterPro" id="IPR031157">
    <property type="entry name" value="G_TR_CS"/>
</dbReference>
<dbReference type="InterPro" id="IPR027417">
    <property type="entry name" value="P-loop_NTPase"/>
</dbReference>
<dbReference type="InterPro" id="IPR004548">
    <property type="entry name" value="PrfC"/>
</dbReference>
<dbReference type="InterPro" id="IPR032090">
    <property type="entry name" value="RF3_C"/>
</dbReference>
<dbReference type="InterPro" id="IPR038467">
    <property type="entry name" value="RF3_dom_3_sf"/>
</dbReference>
<dbReference type="InterPro" id="IPR041732">
    <property type="entry name" value="RF3_GTP-bd"/>
</dbReference>
<dbReference type="InterPro" id="IPR005225">
    <property type="entry name" value="Small_GTP-bd"/>
</dbReference>
<dbReference type="InterPro" id="IPR000795">
    <property type="entry name" value="T_Tr_GTP-bd_dom"/>
</dbReference>
<dbReference type="InterPro" id="IPR009000">
    <property type="entry name" value="Transl_B-barrel_sf"/>
</dbReference>
<dbReference type="NCBIfam" id="TIGR00503">
    <property type="entry name" value="prfC"/>
    <property type="match status" value="1"/>
</dbReference>
<dbReference type="NCBIfam" id="NF001964">
    <property type="entry name" value="PRK00741.1"/>
    <property type="match status" value="1"/>
</dbReference>
<dbReference type="NCBIfam" id="TIGR00231">
    <property type="entry name" value="small_GTP"/>
    <property type="match status" value="1"/>
</dbReference>
<dbReference type="PANTHER" id="PTHR43556">
    <property type="entry name" value="PEPTIDE CHAIN RELEASE FACTOR RF3"/>
    <property type="match status" value="1"/>
</dbReference>
<dbReference type="PANTHER" id="PTHR43556:SF2">
    <property type="entry name" value="PEPTIDE CHAIN RELEASE FACTOR RF3"/>
    <property type="match status" value="1"/>
</dbReference>
<dbReference type="Pfam" id="PF22042">
    <property type="entry name" value="EF-G_D2"/>
    <property type="match status" value="1"/>
</dbReference>
<dbReference type="Pfam" id="PF00009">
    <property type="entry name" value="GTP_EFTU"/>
    <property type="match status" value="1"/>
</dbReference>
<dbReference type="Pfam" id="PF16658">
    <property type="entry name" value="RF3_C"/>
    <property type="match status" value="1"/>
</dbReference>
<dbReference type="PRINTS" id="PR00315">
    <property type="entry name" value="ELONGATNFCT"/>
</dbReference>
<dbReference type="SUPFAM" id="SSF54980">
    <property type="entry name" value="EF-G C-terminal domain-like"/>
    <property type="match status" value="1"/>
</dbReference>
<dbReference type="SUPFAM" id="SSF52540">
    <property type="entry name" value="P-loop containing nucleoside triphosphate hydrolases"/>
    <property type="match status" value="1"/>
</dbReference>
<dbReference type="SUPFAM" id="SSF50447">
    <property type="entry name" value="Translation proteins"/>
    <property type="match status" value="1"/>
</dbReference>
<dbReference type="PROSITE" id="PS00301">
    <property type="entry name" value="G_TR_1"/>
    <property type="match status" value="1"/>
</dbReference>
<dbReference type="PROSITE" id="PS51722">
    <property type="entry name" value="G_TR_2"/>
    <property type="match status" value="1"/>
</dbReference>
<protein>
    <recommendedName>
        <fullName evidence="1">Peptide chain release factor 3</fullName>
        <shortName evidence="1">RF-3</shortName>
    </recommendedName>
</protein>
<feature type="chain" id="PRO_1000202469" description="Peptide chain release factor 3">
    <location>
        <begin position="1"/>
        <end position="529"/>
    </location>
</feature>
<feature type="domain" description="tr-type G">
    <location>
        <begin position="11"/>
        <end position="280"/>
    </location>
</feature>
<feature type="binding site" evidence="1">
    <location>
        <begin position="20"/>
        <end position="27"/>
    </location>
    <ligand>
        <name>GTP</name>
        <dbReference type="ChEBI" id="CHEBI:37565"/>
    </ligand>
</feature>
<feature type="binding site" evidence="1">
    <location>
        <begin position="88"/>
        <end position="92"/>
    </location>
    <ligand>
        <name>GTP</name>
        <dbReference type="ChEBI" id="CHEBI:37565"/>
    </ligand>
</feature>
<feature type="binding site" evidence="1">
    <location>
        <begin position="142"/>
        <end position="145"/>
    </location>
    <ligand>
        <name>GTP</name>
        <dbReference type="ChEBI" id="CHEBI:37565"/>
    </ligand>
</feature>
<accession>C6DJU6</accession>